<reference key="1">
    <citation type="journal article" date="2003" name="PLoS Biol.">
        <title>The genome sequence of Caenorhabditis briggsae: a platform for comparative genomics.</title>
        <authorList>
            <person name="Stein L.D."/>
            <person name="Bao Z."/>
            <person name="Blasiar D."/>
            <person name="Blumenthal T."/>
            <person name="Brent M.R."/>
            <person name="Chen N."/>
            <person name="Chinwalla A."/>
            <person name="Clarke L."/>
            <person name="Clee C."/>
            <person name="Coghlan A."/>
            <person name="Coulson A."/>
            <person name="D'Eustachio P."/>
            <person name="Fitch D.H.A."/>
            <person name="Fulton L.A."/>
            <person name="Fulton R.E."/>
            <person name="Griffiths-Jones S."/>
            <person name="Harris T.W."/>
            <person name="Hillier L.W."/>
            <person name="Kamath R."/>
            <person name="Kuwabara P.E."/>
            <person name="Mardis E.R."/>
            <person name="Marra M.A."/>
            <person name="Miner T.L."/>
            <person name="Minx P."/>
            <person name="Mullikin J.C."/>
            <person name="Plumb R.W."/>
            <person name="Rogers J."/>
            <person name="Schein J.E."/>
            <person name="Sohrmann M."/>
            <person name="Spieth J."/>
            <person name="Stajich J.E."/>
            <person name="Wei C."/>
            <person name="Willey D."/>
            <person name="Wilson R.K."/>
            <person name="Durbin R.M."/>
            <person name="Waterston R.H."/>
        </authorList>
    </citation>
    <scope>NUCLEOTIDE SEQUENCE [LARGE SCALE GENOMIC DNA]</scope>
    <source>
        <strain>AF16</strain>
    </source>
</reference>
<evidence type="ECO:0000250" key="1"/>
<evidence type="ECO:0000256" key="2">
    <source>
        <dbReference type="SAM" id="MobiDB-lite"/>
    </source>
</evidence>
<evidence type="ECO:0000305" key="3"/>
<gene>
    <name type="primary">tps-1</name>
    <name type="ORF">CBG01861</name>
</gene>
<name>TPS1_CAEBR</name>
<accession>A8WRG3</accession>
<dbReference type="EC" id="2.4.1.15"/>
<dbReference type="EMBL" id="HE601451">
    <property type="protein sequence ID" value="CAP23071.2"/>
    <property type="molecule type" value="Genomic_DNA"/>
</dbReference>
<dbReference type="SMR" id="A8WRG3"/>
<dbReference type="FunCoup" id="A8WRG3">
    <property type="interactions" value="1"/>
</dbReference>
<dbReference type="STRING" id="6238.A8WRG3"/>
<dbReference type="WormBase" id="CBG01861a">
    <property type="protein sequence ID" value="CBP40035"/>
    <property type="gene ID" value="WBGene00025041"/>
    <property type="gene designation" value="Cbr-tps-1"/>
</dbReference>
<dbReference type="eggNOG" id="KOG1050">
    <property type="taxonomic scope" value="Eukaryota"/>
</dbReference>
<dbReference type="HOGENOM" id="CLU_007752_0_0_1"/>
<dbReference type="InParanoid" id="A8WRG3"/>
<dbReference type="OMA" id="HYLAMDI"/>
<dbReference type="Proteomes" id="UP000008549">
    <property type="component" value="Unassembled WGS sequence"/>
</dbReference>
<dbReference type="GO" id="GO:0003825">
    <property type="term" value="F:alpha,alpha-trehalose-phosphate synthase (UDP-forming) activity"/>
    <property type="evidence" value="ECO:0000318"/>
    <property type="project" value="GO_Central"/>
</dbReference>
<dbReference type="GO" id="GO:0004805">
    <property type="term" value="F:trehalose-phosphatase activity"/>
    <property type="evidence" value="ECO:0000318"/>
    <property type="project" value="GO_Central"/>
</dbReference>
<dbReference type="GO" id="GO:0005992">
    <property type="term" value="P:trehalose biosynthetic process"/>
    <property type="evidence" value="ECO:0000318"/>
    <property type="project" value="GO_Central"/>
</dbReference>
<dbReference type="CDD" id="cd03788">
    <property type="entry name" value="GT20_TPS"/>
    <property type="match status" value="1"/>
</dbReference>
<dbReference type="FunFam" id="1.20.58.1800:FF:000001">
    <property type="entry name" value="Alpha,alpha-trehalose-phosphate synthase [UDP-forming] 1"/>
    <property type="match status" value="1"/>
</dbReference>
<dbReference type="FunFam" id="3.30.70.3080:FF:000002">
    <property type="entry name" value="Alpha,alpha-trehalose-phosphate synthase [UDP-forming] 2"/>
    <property type="match status" value="1"/>
</dbReference>
<dbReference type="FunFam" id="3.40.50.2000:FF:000206">
    <property type="entry name" value="Trehalose-6-phosphate synthase"/>
    <property type="match status" value="1"/>
</dbReference>
<dbReference type="Gene3D" id="1.20.58.1800">
    <property type="match status" value="1"/>
</dbReference>
<dbReference type="Gene3D" id="3.30.70.3080">
    <property type="match status" value="1"/>
</dbReference>
<dbReference type="Gene3D" id="3.40.50.2000">
    <property type="entry name" value="Glycogen Phosphorylase B"/>
    <property type="match status" value="2"/>
</dbReference>
<dbReference type="Gene3D" id="3.40.50.1000">
    <property type="entry name" value="HAD superfamily/HAD-like"/>
    <property type="match status" value="1"/>
</dbReference>
<dbReference type="InterPro" id="IPR001830">
    <property type="entry name" value="Glyco_trans_20"/>
</dbReference>
<dbReference type="InterPro" id="IPR036412">
    <property type="entry name" value="HAD-like_sf"/>
</dbReference>
<dbReference type="InterPro" id="IPR023214">
    <property type="entry name" value="HAD_sf"/>
</dbReference>
<dbReference type="InterPro" id="IPR049063">
    <property type="entry name" value="T6PP_C"/>
</dbReference>
<dbReference type="InterPro" id="IPR041064">
    <property type="entry name" value="T6PP_helical"/>
</dbReference>
<dbReference type="PANTHER" id="PTHR10788:SF106">
    <property type="entry name" value="BCDNA.GH08860"/>
    <property type="match status" value="1"/>
</dbReference>
<dbReference type="PANTHER" id="PTHR10788">
    <property type="entry name" value="TREHALOSE-6-PHOSPHATE SYNTHASE"/>
    <property type="match status" value="1"/>
</dbReference>
<dbReference type="Pfam" id="PF00982">
    <property type="entry name" value="Glyco_transf_20"/>
    <property type="match status" value="1"/>
</dbReference>
<dbReference type="Pfam" id="PF21141">
    <property type="entry name" value="T6PP_C"/>
    <property type="match status" value="1"/>
</dbReference>
<dbReference type="Pfam" id="PF18572">
    <property type="entry name" value="T6PP_N"/>
    <property type="match status" value="1"/>
</dbReference>
<dbReference type="SUPFAM" id="SSF56784">
    <property type="entry name" value="HAD-like"/>
    <property type="match status" value="1"/>
</dbReference>
<dbReference type="SUPFAM" id="SSF53756">
    <property type="entry name" value="UDP-Glycosyltransferase/glycogen phosphorylase"/>
    <property type="match status" value="1"/>
</dbReference>
<keyword id="KW-0328">Glycosyltransferase</keyword>
<keyword id="KW-1185">Reference proteome</keyword>
<keyword id="KW-0808">Transferase</keyword>
<feature type="chain" id="PRO_0000385175" description="Alpha,alpha-trehalose-phosphate synthase [UDP-forming] 1">
    <location>
        <begin position="1"/>
        <end position="1374"/>
    </location>
</feature>
<feature type="region of interest" description="Disordered" evidence="2">
    <location>
        <begin position="28"/>
        <end position="66"/>
    </location>
</feature>
<feature type="region of interest" description="Disordered" evidence="2">
    <location>
        <begin position="86"/>
        <end position="117"/>
    </location>
</feature>
<feature type="region of interest" description="Disordered" evidence="2">
    <location>
        <begin position="1352"/>
        <end position="1374"/>
    </location>
</feature>
<feature type="compositionally biased region" description="Basic and acidic residues" evidence="2">
    <location>
        <begin position="56"/>
        <end position="66"/>
    </location>
</feature>
<feature type="compositionally biased region" description="Basic and acidic residues" evidence="2">
    <location>
        <begin position="86"/>
        <end position="95"/>
    </location>
</feature>
<feature type="compositionally biased region" description="Acidic residues" evidence="2">
    <location>
        <begin position="96"/>
        <end position="109"/>
    </location>
</feature>
<feature type="compositionally biased region" description="Acidic residues" evidence="2">
    <location>
        <begin position="1356"/>
        <end position="1368"/>
    </location>
</feature>
<protein>
    <recommendedName>
        <fullName>Alpha,alpha-trehalose-phosphate synthase [UDP-forming] 1</fullName>
        <ecNumber>2.4.1.15</ecNumber>
    </recommendedName>
    <alternativeName>
        <fullName>Trehalose-6-phosphate synthase 1</fullName>
    </alternativeName>
    <alternativeName>
        <fullName>UDP-glucose-glucosephosphate glucosyltransferase 1</fullName>
    </alternativeName>
</protein>
<comment type="function">
    <text evidence="1">Catalyzes the production of trehalose from glucose-6-phosphate and UDP-alpha-D-glucose in a 2 step process.</text>
</comment>
<comment type="catalytic activity">
    <reaction>
        <text>D-glucose 6-phosphate + UDP-alpha-D-glucose = alpha,alpha-trehalose 6-phosphate + UDP + H(+)</text>
        <dbReference type="Rhea" id="RHEA:18889"/>
        <dbReference type="ChEBI" id="CHEBI:15378"/>
        <dbReference type="ChEBI" id="CHEBI:58223"/>
        <dbReference type="ChEBI" id="CHEBI:58429"/>
        <dbReference type="ChEBI" id="CHEBI:58885"/>
        <dbReference type="ChEBI" id="CHEBI:61548"/>
        <dbReference type="EC" id="2.4.1.15"/>
    </reaction>
</comment>
<comment type="similarity">
    <text evidence="3">In the N-terminal section; belongs to the glycosyltransferase 20 family.</text>
</comment>
<comment type="similarity">
    <text evidence="3">In the C-terminal section; belongs to the gob-1 trehalose phosphatase family.</text>
</comment>
<proteinExistence type="inferred from homology"/>
<sequence>MVQQLQKSMSDGMATTAAAVPMNANGVDTGKVPTAPPDVFFSTENEPEDCTPVKMDPFDRPKSDKDPVEDAIERLLKVMEKIDCPYTPGKEKGVDQDESDDMTESEDHDEMAKDDEGIPANEVRVETRKMDCTTGQLVAPRIYEKVDTLSSTSESSAEEDESMMIIKEGIRVCYGVWKKRQKNSEMALKGLAIVLELCLTQPSARDEIFSVLLETLGFNTVTYWKAVVPQVVDSDLTYATQYREALLFSMCLYDVNHSKNRLRELYAAIPGFRQSMLGIRAKQFTERYRHLQMKIARSRQSSRMSSKYGSEDNIQAMVTLANDVIMDEETAPTQMPLVDMSHDKQRVINVSNAPPVSISRKTSGSWEIKQGSGGLVACVDPVMSADKKNIWLSNLGVNMQEELKEHSTTTNSIGLPLIKQACAGEVFCVLERNEKKELTPKQQAVESDMSLLSVLNTYNKHSYQLNPVVVNQDDYDTYYGGISNGLLWPALHNLPQFISPCYNDPEALREQWCAYVRVNYLFSINAARNSRAQDFIWIHDYHLMLCGQIMRSLEGSLDVSSIEEREGKQKESLQIGFFLHIPFQPPANFMTKYRTVGEPIVRALLRFTKVGFQTSRDRETFVKLVADHIKRTKIDYDSRLDRYTIEHDGFACSLGVFPVSIKIADFVNIAKNPQTVIEAEEIRKQIMGKCADGGQLFFSVERFDYTKGIAEKLRAWQRYFEKYPDRIGKDVLFQVAVTNRRSVESYRQYQDDVMALAELINQKFHSEQYPEWKPVIFETDGLPRSRLIAHYLAMDIGVVTPSKDGMNLVAKEMLVCNPTASLVLSTGAGTEVQLSNAQFYSEQEGKCYHRVEDIANTEAFADNFFAAATESKETRNKHGEKINQFLCVHDIDEWSDQFLDPKWTHEVISECEVKQLGQFYGLMNRTAQVRRQIVECVLKGLPIRPHFKFSLENAKVTRQANDSECTTLTSLETSCPEGTSKLTLEADEESGEEKGFKITYDIHDELSEMEKDLAFLSFIQSDEYENAEEFIKTIGSFYEGGPILFSEEVKQAAEMLQRGIHYNTFFTDRDGTLKSYACSYPTSVQPAYSAVIQAQFARRCATFCAIVTTAPLIHTGILEVATIPEGYYAYGASAGREWYLNPAQQFKDRSFSAVDLTLMNKVFELIEELLEKPEFRTFKWIGSGIQKHCGHITIAKQDVNGTIPARKVTRLHEQLVKIVNDFDPTGTTLTMRESDLDFKIYVKAKLKGRIFNKGHGIRLVKERLKPNMSKGSCLVCGDSESDIPMLEECLKLAGSKVYTIWVTRDQALQEKVSQLCERYSCTNIHYVTCPQVLLGAMAYATAHTLTNEKNRKADSYYDDSDTPMDQEDTPSKQQ</sequence>
<organism>
    <name type="scientific">Caenorhabditis briggsae</name>
    <dbReference type="NCBI Taxonomy" id="6238"/>
    <lineage>
        <taxon>Eukaryota</taxon>
        <taxon>Metazoa</taxon>
        <taxon>Ecdysozoa</taxon>
        <taxon>Nematoda</taxon>
        <taxon>Chromadorea</taxon>
        <taxon>Rhabditida</taxon>
        <taxon>Rhabditina</taxon>
        <taxon>Rhabditomorpha</taxon>
        <taxon>Rhabditoidea</taxon>
        <taxon>Rhabditidae</taxon>
        <taxon>Peloderinae</taxon>
        <taxon>Caenorhabditis</taxon>
    </lineage>
</organism>